<dbReference type="EC" id="3.1.1.-"/>
<dbReference type="EMBL" id="AL162873">
    <property type="protein sequence ID" value="CAB85518.1"/>
    <property type="molecule type" value="Genomic_DNA"/>
</dbReference>
<dbReference type="EMBL" id="CP002688">
    <property type="protein sequence ID" value="AED90679.1"/>
    <property type="molecule type" value="Genomic_DNA"/>
</dbReference>
<dbReference type="PIR" id="T48425">
    <property type="entry name" value="T48425"/>
</dbReference>
<dbReference type="RefSeq" id="NP_196018.1">
    <property type="nucleotide sequence ID" value="NM_120480.1"/>
</dbReference>
<dbReference type="SMR" id="Q9LZB2"/>
<dbReference type="FunCoup" id="Q9LZB2">
    <property type="interactions" value="65"/>
</dbReference>
<dbReference type="GlyGen" id="Q9LZB2">
    <property type="glycosylation" value="1 site"/>
</dbReference>
<dbReference type="PaxDb" id="3702-AT5G03980.1"/>
<dbReference type="EnsemblPlants" id="AT5G03980.1">
    <property type="protein sequence ID" value="AT5G03980.1"/>
    <property type="gene ID" value="AT5G03980"/>
</dbReference>
<dbReference type="GeneID" id="830277"/>
<dbReference type="Gramene" id="AT5G03980.1">
    <property type="protein sequence ID" value="AT5G03980.1"/>
    <property type="gene ID" value="AT5G03980"/>
</dbReference>
<dbReference type="KEGG" id="ath:AT5G03980"/>
<dbReference type="Araport" id="AT5G03980"/>
<dbReference type="TAIR" id="AT5G03980"/>
<dbReference type="eggNOG" id="ENOG502QQUR">
    <property type="taxonomic scope" value="Eukaryota"/>
</dbReference>
<dbReference type="HOGENOM" id="CLU_015101_2_1_1"/>
<dbReference type="InParanoid" id="Q9LZB2"/>
<dbReference type="OMA" id="PYLNVNT"/>
<dbReference type="PhylomeDB" id="Q9LZB2"/>
<dbReference type="BioCyc" id="ARA:AT5G03980-MONOMER"/>
<dbReference type="PRO" id="PR:Q9LZB2"/>
<dbReference type="Proteomes" id="UP000006548">
    <property type="component" value="Chromosome 5"/>
</dbReference>
<dbReference type="ExpressionAtlas" id="Q9LZB2">
    <property type="expression patterns" value="differential"/>
</dbReference>
<dbReference type="GO" id="GO:0005576">
    <property type="term" value="C:extracellular region"/>
    <property type="evidence" value="ECO:0007669"/>
    <property type="project" value="UniProtKB-SubCell"/>
</dbReference>
<dbReference type="GO" id="GO:0016788">
    <property type="term" value="F:hydrolase activity, acting on ester bonds"/>
    <property type="evidence" value="ECO:0007669"/>
    <property type="project" value="InterPro"/>
</dbReference>
<dbReference type="GO" id="GO:0016042">
    <property type="term" value="P:lipid catabolic process"/>
    <property type="evidence" value="ECO:0007669"/>
    <property type="project" value="UniProtKB-KW"/>
</dbReference>
<dbReference type="Gene3D" id="3.40.50.1110">
    <property type="entry name" value="SGNH hydrolase"/>
    <property type="match status" value="1"/>
</dbReference>
<dbReference type="InterPro" id="IPR001087">
    <property type="entry name" value="GDSL"/>
</dbReference>
<dbReference type="InterPro" id="IPR036514">
    <property type="entry name" value="SGNH_hydro_sf"/>
</dbReference>
<dbReference type="PANTHER" id="PTHR22835:SF677">
    <property type="entry name" value="ACETYLAJMALAN ESTERASE-LIKE"/>
    <property type="match status" value="1"/>
</dbReference>
<dbReference type="PANTHER" id="PTHR22835">
    <property type="entry name" value="ZINC FINGER FYVE DOMAIN CONTAINING PROTEIN"/>
    <property type="match status" value="1"/>
</dbReference>
<dbReference type="Pfam" id="PF00657">
    <property type="entry name" value="Lipase_GDSL"/>
    <property type="match status" value="1"/>
</dbReference>
<dbReference type="SUPFAM" id="SSF52266">
    <property type="entry name" value="SGNH hydrolase"/>
    <property type="match status" value="1"/>
</dbReference>
<organism>
    <name type="scientific">Arabidopsis thaliana</name>
    <name type="common">Mouse-ear cress</name>
    <dbReference type="NCBI Taxonomy" id="3702"/>
    <lineage>
        <taxon>Eukaryota</taxon>
        <taxon>Viridiplantae</taxon>
        <taxon>Streptophyta</taxon>
        <taxon>Embryophyta</taxon>
        <taxon>Tracheophyta</taxon>
        <taxon>Spermatophyta</taxon>
        <taxon>Magnoliopsida</taxon>
        <taxon>eudicotyledons</taxon>
        <taxon>Gunneridae</taxon>
        <taxon>Pentapetalae</taxon>
        <taxon>rosids</taxon>
        <taxon>malvids</taxon>
        <taxon>Brassicales</taxon>
        <taxon>Brassicaceae</taxon>
        <taxon>Camelineae</taxon>
        <taxon>Arabidopsis</taxon>
    </lineage>
</organism>
<proteinExistence type="evidence at transcript level"/>
<reference key="1">
    <citation type="journal article" date="2000" name="Nature">
        <title>Sequence and analysis of chromosome 5 of the plant Arabidopsis thaliana.</title>
        <authorList>
            <person name="Tabata S."/>
            <person name="Kaneko T."/>
            <person name="Nakamura Y."/>
            <person name="Kotani H."/>
            <person name="Kato T."/>
            <person name="Asamizu E."/>
            <person name="Miyajima N."/>
            <person name="Sasamoto S."/>
            <person name="Kimura T."/>
            <person name="Hosouchi T."/>
            <person name="Kawashima K."/>
            <person name="Kohara M."/>
            <person name="Matsumoto M."/>
            <person name="Matsuno A."/>
            <person name="Muraki A."/>
            <person name="Nakayama S."/>
            <person name="Nakazaki N."/>
            <person name="Naruo K."/>
            <person name="Okumura S."/>
            <person name="Shinpo S."/>
            <person name="Takeuchi C."/>
            <person name="Wada T."/>
            <person name="Watanabe A."/>
            <person name="Yamada M."/>
            <person name="Yasuda M."/>
            <person name="Sato S."/>
            <person name="de la Bastide M."/>
            <person name="Huang E."/>
            <person name="Spiegel L."/>
            <person name="Gnoj L."/>
            <person name="O'Shaughnessy A."/>
            <person name="Preston R."/>
            <person name="Habermann K."/>
            <person name="Murray J."/>
            <person name="Johnson D."/>
            <person name="Rohlfing T."/>
            <person name="Nelson J."/>
            <person name="Stoneking T."/>
            <person name="Pepin K."/>
            <person name="Spieth J."/>
            <person name="Sekhon M."/>
            <person name="Armstrong J."/>
            <person name="Becker M."/>
            <person name="Belter E."/>
            <person name="Cordum H."/>
            <person name="Cordes M."/>
            <person name="Courtney L."/>
            <person name="Courtney W."/>
            <person name="Dante M."/>
            <person name="Du H."/>
            <person name="Edwards J."/>
            <person name="Fryman J."/>
            <person name="Haakensen B."/>
            <person name="Lamar E."/>
            <person name="Latreille P."/>
            <person name="Leonard S."/>
            <person name="Meyer R."/>
            <person name="Mulvaney E."/>
            <person name="Ozersky P."/>
            <person name="Riley A."/>
            <person name="Strowmatt C."/>
            <person name="Wagner-McPherson C."/>
            <person name="Wollam A."/>
            <person name="Yoakum M."/>
            <person name="Bell M."/>
            <person name="Dedhia N."/>
            <person name="Parnell L."/>
            <person name="Shah R."/>
            <person name="Rodriguez M."/>
            <person name="Hoon See L."/>
            <person name="Vil D."/>
            <person name="Baker J."/>
            <person name="Kirchoff K."/>
            <person name="Toth K."/>
            <person name="King L."/>
            <person name="Bahret A."/>
            <person name="Miller B."/>
            <person name="Marra M.A."/>
            <person name="Martienssen R."/>
            <person name="McCombie W.R."/>
            <person name="Wilson R.K."/>
            <person name="Murphy G."/>
            <person name="Bancroft I."/>
            <person name="Volckaert G."/>
            <person name="Wambutt R."/>
            <person name="Duesterhoeft A."/>
            <person name="Stiekema W."/>
            <person name="Pohl T."/>
            <person name="Entian K.-D."/>
            <person name="Terryn N."/>
            <person name="Hartley N."/>
            <person name="Bent E."/>
            <person name="Johnson S."/>
            <person name="Langham S.-A."/>
            <person name="McCullagh B."/>
            <person name="Robben J."/>
            <person name="Grymonprez B."/>
            <person name="Zimmermann W."/>
            <person name="Ramsperger U."/>
            <person name="Wedler H."/>
            <person name="Balke K."/>
            <person name="Wedler E."/>
            <person name="Peters S."/>
            <person name="van Staveren M."/>
            <person name="Dirkse W."/>
            <person name="Mooijman P."/>
            <person name="Klein Lankhorst R."/>
            <person name="Weitzenegger T."/>
            <person name="Bothe G."/>
            <person name="Rose M."/>
            <person name="Hauf J."/>
            <person name="Berneiser S."/>
            <person name="Hempel S."/>
            <person name="Feldpausch M."/>
            <person name="Lamberth S."/>
            <person name="Villarroel R."/>
            <person name="Gielen J."/>
            <person name="Ardiles W."/>
            <person name="Bents O."/>
            <person name="Lemcke K."/>
            <person name="Kolesov G."/>
            <person name="Mayer K.F.X."/>
            <person name="Rudd S."/>
            <person name="Schoof H."/>
            <person name="Schueller C."/>
            <person name="Zaccaria P."/>
            <person name="Mewes H.-W."/>
            <person name="Bevan M."/>
            <person name="Fransz P.F."/>
        </authorList>
    </citation>
    <scope>NUCLEOTIDE SEQUENCE [LARGE SCALE GENOMIC DNA]</scope>
    <source>
        <strain>cv. Columbia</strain>
    </source>
</reference>
<reference key="2">
    <citation type="journal article" date="2017" name="Plant J.">
        <title>Araport11: a complete reannotation of the Arabidopsis thaliana reference genome.</title>
        <authorList>
            <person name="Cheng C.Y."/>
            <person name="Krishnakumar V."/>
            <person name="Chan A.P."/>
            <person name="Thibaud-Nissen F."/>
            <person name="Schobel S."/>
            <person name="Town C.D."/>
        </authorList>
    </citation>
    <scope>GENOME REANNOTATION</scope>
    <source>
        <strain>cv. Columbia</strain>
    </source>
</reference>
<reference key="3">
    <citation type="journal article" date="2004" name="Prog. Lipid Res.">
        <title>GDSL family of serine esterases/lipases.</title>
        <authorList>
            <person name="Akoh C.C."/>
            <person name="Lee G.-C."/>
            <person name="Liaw Y.-C."/>
            <person name="Huang T.-H."/>
            <person name="Shaw J.-F."/>
        </authorList>
    </citation>
    <scope>REVIEW</scope>
</reference>
<reference key="4">
    <citation type="journal article" date="2008" name="Pak. J. Biol. Sci.">
        <title>Sequence analysis of GDSL lipase gene family in Arabidopsis thaliana.</title>
        <authorList>
            <person name="Ling H."/>
        </authorList>
    </citation>
    <scope>GENE FAMILY</scope>
</reference>
<evidence type="ECO:0000250" key="1"/>
<evidence type="ECO:0000255" key="2"/>
<evidence type="ECO:0000305" key="3"/>
<keyword id="KW-0325">Glycoprotein</keyword>
<keyword id="KW-0378">Hydrolase</keyword>
<keyword id="KW-0442">Lipid degradation</keyword>
<keyword id="KW-0443">Lipid metabolism</keyword>
<keyword id="KW-1185">Reference proteome</keyword>
<keyword id="KW-0964">Secreted</keyword>
<keyword id="KW-0732">Signal</keyword>
<protein>
    <recommendedName>
        <fullName>GDSL esterase/lipase At5g03980</fullName>
        <ecNumber>3.1.1.-</ecNumber>
    </recommendedName>
    <alternativeName>
        <fullName>Extracellular lipase At5g03980</fullName>
    </alternativeName>
</protein>
<feature type="signal peptide" evidence="2">
    <location>
        <begin position="1"/>
        <end position="21"/>
    </location>
</feature>
<feature type="chain" id="PRO_0000367414" description="GDSL esterase/lipase At5g03980">
    <location>
        <begin position="22"/>
        <end position="323"/>
    </location>
</feature>
<feature type="active site" description="Nucleophile" evidence="1">
    <location>
        <position position="36"/>
    </location>
</feature>
<feature type="active site" evidence="1">
    <location>
        <position position="294"/>
    </location>
</feature>
<feature type="active site" evidence="1">
    <location>
        <position position="297"/>
    </location>
</feature>
<feature type="glycosylation site" description="N-linked (GlcNAc...) asparagine" evidence="2">
    <location>
        <position position="77"/>
    </location>
</feature>
<name>GDL74_ARATH</name>
<sequence>MSTTKALSLLVFILFVSLVHSSDQCPINSIYQFGDSISDTGNLIRNGPASSPTPKPLPQREHNVFVNFGVSGSTALNSSFFSERNLHVPATNTPLSMQLAWFKGHLRSTCHGSSSDCLKHSLFMVGEIGGNDYNYGFFQGKPMEEIRSYIPHVVGAITAAAREVIRAGAVNVVVPGNFPVGCFPIYLTSFPVKDTKDYDDNGCLTHLNEFAMDHNNQLQEAIASLRKEFPDVAIVYGDYYNAFQYVLRSERFDKSVALKSCCGTGGAYNYDGKRPYGAVGVPVCQNPHKFISWDGVHLTQKAYRFMSKFLNNQILSQIKCTRA</sequence>
<comment type="subcellular location">
    <subcellularLocation>
        <location evidence="3">Secreted</location>
    </subcellularLocation>
</comment>
<comment type="similarity">
    <text evidence="3">Belongs to the 'GDSL' lipolytic enzyme family.</text>
</comment>
<gene>
    <name type="ordered locus">At5g03980</name>
    <name type="ORF">F8F6.190</name>
</gene>
<accession>Q9LZB2</accession>